<sequence length="281" mass="30814">MITTQEISQIRQQVRAWHAKGETVAFVPTMGNLHLGHITLIKEAVKRADHVVASIFVNPMQFGQNEDLDAYPRTLAADQQALSDAGAELLFTPTPEIIYPKGMEQQSFVEVPNISEQLCGASRPGHFRGVATVVCKLFNIVQPDIALFGRKDFQQLLVIETMVADLSMPIEIIGVDTIREASGLAMSSRNGYLSQDQKDRAATLKRTMDTMSAAIQQGESIQDVIQAGHSQLSEAGFRPDYLEVRSTSDLSPASSEDSSLVILAAAYMGDTRLIDNLCFTR</sequence>
<feature type="chain" id="PRO_1000097114" description="Pantothenate synthetase">
    <location>
        <begin position="1"/>
        <end position="281"/>
    </location>
</feature>
<feature type="active site" description="Proton donor" evidence="1">
    <location>
        <position position="37"/>
    </location>
</feature>
<feature type="binding site" evidence="1">
    <location>
        <begin position="30"/>
        <end position="37"/>
    </location>
    <ligand>
        <name>ATP</name>
        <dbReference type="ChEBI" id="CHEBI:30616"/>
    </ligand>
</feature>
<feature type="binding site" evidence="1">
    <location>
        <position position="61"/>
    </location>
    <ligand>
        <name>(R)-pantoate</name>
        <dbReference type="ChEBI" id="CHEBI:15980"/>
    </ligand>
</feature>
<feature type="binding site" evidence="1">
    <location>
        <position position="61"/>
    </location>
    <ligand>
        <name>beta-alanine</name>
        <dbReference type="ChEBI" id="CHEBI:57966"/>
    </ligand>
</feature>
<feature type="binding site" evidence="1">
    <location>
        <begin position="149"/>
        <end position="152"/>
    </location>
    <ligand>
        <name>ATP</name>
        <dbReference type="ChEBI" id="CHEBI:30616"/>
    </ligand>
</feature>
<feature type="binding site" evidence="1">
    <location>
        <position position="155"/>
    </location>
    <ligand>
        <name>(R)-pantoate</name>
        <dbReference type="ChEBI" id="CHEBI:15980"/>
    </ligand>
</feature>
<feature type="binding site" evidence="1">
    <location>
        <position position="178"/>
    </location>
    <ligand>
        <name>ATP</name>
        <dbReference type="ChEBI" id="CHEBI:30616"/>
    </ligand>
</feature>
<feature type="binding site" evidence="1">
    <location>
        <begin position="186"/>
        <end position="189"/>
    </location>
    <ligand>
        <name>ATP</name>
        <dbReference type="ChEBI" id="CHEBI:30616"/>
    </ligand>
</feature>
<evidence type="ECO:0000255" key="1">
    <source>
        <dbReference type="HAMAP-Rule" id="MF_00158"/>
    </source>
</evidence>
<keyword id="KW-0067">ATP-binding</keyword>
<keyword id="KW-0963">Cytoplasm</keyword>
<keyword id="KW-0436">Ligase</keyword>
<keyword id="KW-0547">Nucleotide-binding</keyword>
<keyword id="KW-0566">Pantothenate biosynthesis</keyword>
<keyword id="KW-1185">Reference proteome</keyword>
<reference key="1">
    <citation type="submission" date="2007-08" db="EMBL/GenBank/DDBJ databases">
        <title>Complete sequence of Shewanella sediminis HAW-EB3.</title>
        <authorList>
            <consortium name="US DOE Joint Genome Institute"/>
            <person name="Copeland A."/>
            <person name="Lucas S."/>
            <person name="Lapidus A."/>
            <person name="Barry K."/>
            <person name="Glavina del Rio T."/>
            <person name="Dalin E."/>
            <person name="Tice H."/>
            <person name="Pitluck S."/>
            <person name="Chertkov O."/>
            <person name="Brettin T."/>
            <person name="Bruce D."/>
            <person name="Detter J.C."/>
            <person name="Han C."/>
            <person name="Schmutz J."/>
            <person name="Larimer F."/>
            <person name="Land M."/>
            <person name="Hauser L."/>
            <person name="Kyrpides N."/>
            <person name="Kim E."/>
            <person name="Zhao J.-S."/>
            <person name="Richardson P."/>
        </authorList>
    </citation>
    <scope>NUCLEOTIDE SEQUENCE [LARGE SCALE GENOMIC DNA]</scope>
    <source>
        <strain>HAW-EB3</strain>
    </source>
</reference>
<name>PANC_SHESH</name>
<accession>A8G085</accession>
<dbReference type="EC" id="6.3.2.1" evidence="1"/>
<dbReference type="EMBL" id="CP000821">
    <property type="protein sequence ID" value="ABV38508.1"/>
    <property type="molecule type" value="Genomic_DNA"/>
</dbReference>
<dbReference type="RefSeq" id="WP_012144238.1">
    <property type="nucleotide sequence ID" value="NC_009831.1"/>
</dbReference>
<dbReference type="SMR" id="A8G085"/>
<dbReference type="STRING" id="425104.Ssed_3904"/>
<dbReference type="KEGG" id="sse:Ssed_3904"/>
<dbReference type="eggNOG" id="COG0414">
    <property type="taxonomic scope" value="Bacteria"/>
</dbReference>
<dbReference type="HOGENOM" id="CLU_047148_0_0_6"/>
<dbReference type="OrthoDB" id="9773087at2"/>
<dbReference type="UniPathway" id="UPA00028">
    <property type="reaction ID" value="UER00005"/>
</dbReference>
<dbReference type="Proteomes" id="UP000002015">
    <property type="component" value="Chromosome"/>
</dbReference>
<dbReference type="GO" id="GO:0005829">
    <property type="term" value="C:cytosol"/>
    <property type="evidence" value="ECO:0007669"/>
    <property type="project" value="TreeGrafter"/>
</dbReference>
<dbReference type="GO" id="GO:0005524">
    <property type="term" value="F:ATP binding"/>
    <property type="evidence" value="ECO:0007669"/>
    <property type="project" value="UniProtKB-KW"/>
</dbReference>
<dbReference type="GO" id="GO:0004592">
    <property type="term" value="F:pantoate-beta-alanine ligase activity"/>
    <property type="evidence" value="ECO:0007669"/>
    <property type="project" value="UniProtKB-UniRule"/>
</dbReference>
<dbReference type="GO" id="GO:0015940">
    <property type="term" value="P:pantothenate biosynthetic process"/>
    <property type="evidence" value="ECO:0007669"/>
    <property type="project" value="UniProtKB-UniRule"/>
</dbReference>
<dbReference type="CDD" id="cd00560">
    <property type="entry name" value="PanC"/>
    <property type="match status" value="1"/>
</dbReference>
<dbReference type="FunFam" id="3.40.50.620:FF:000013">
    <property type="entry name" value="Pantothenate synthetase"/>
    <property type="match status" value="1"/>
</dbReference>
<dbReference type="Gene3D" id="3.40.50.620">
    <property type="entry name" value="HUPs"/>
    <property type="match status" value="1"/>
</dbReference>
<dbReference type="Gene3D" id="3.30.1300.10">
    <property type="entry name" value="Pantoate-beta-alanine ligase, C-terminal domain"/>
    <property type="match status" value="1"/>
</dbReference>
<dbReference type="HAMAP" id="MF_00158">
    <property type="entry name" value="PanC"/>
    <property type="match status" value="1"/>
</dbReference>
<dbReference type="InterPro" id="IPR004821">
    <property type="entry name" value="Cyt_trans-like"/>
</dbReference>
<dbReference type="InterPro" id="IPR003721">
    <property type="entry name" value="Pantoate_ligase"/>
</dbReference>
<dbReference type="InterPro" id="IPR042176">
    <property type="entry name" value="Pantoate_ligase_C"/>
</dbReference>
<dbReference type="InterPro" id="IPR014729">
    <property type="entry name" value="Rossmann-like_a/b/a_fold"/>
</dbReference>
<dbReference type="NCBIfam" id="TIGR00125">
    <property type="entry name" value="cyt_tran_rel"/>
    <property type="match status" value="1"/>
</dbReference>
<dbReference type="NCBIfam" id="TIGR00018">
    <property type="entry name" value="panC"/>
    <property type="match status" value="1"/>
</dbReference>
<dbReference type="PANTHER" id="PTHR21299">
    <property type="entry name" value="CYTIDYLATE KINASE/PANTOATE-BETA-ALANINE LIGASE"/>
    <property type="match status" value="1"/>
</dbReference>
<dbReference type="PANTHER" id="PTHR21299:SF1">
    <property type="entry name" value="PANTOATE--BETA-ALANINE LIGASE"/>
    <property type="match status" value="1"/>
</dbReference>
<dbReference type="Pfam" id="PF02569">
    <property type="entry name" value="Pantoate_ligase"/>
    <property type="match status" value="1"/>
</dbReference>
<dbReference type="SUPFAM" id="SSF52374">
    <property type="entry name" value="Nucleotidylyl transferase"/>
    <property type="match status" value="1"/>
</dbReference>
<comment type="function">
    <text evidence="1">Catalyzes the condensation of pantoate with beta-alanine in an ATP-dependent reaction via a pantoyl-adenylate intermediate.</text>
</comment>
<comment type="catalytic activity">
    <reaction evidence="1">
        <text>(R)-pantoate + beta-alanine + ATP = (R)-pantothenate + AMP + diphosphate + H(+)</text>
        <dbReference type="Rhea" id="RHEA:10912"/>
        <dbReference type="ChEBI" id="CHEBI:15378"/>
        <dbReference type="ChEBI" id="CHEBI:15980"/>
        <dbReference type="ChEBI" id="CHEBI:29032"/>
        <dbReference type="ChEBI" id="CHEBI:30616"/>
        <dbReference type="ChEBI" id="CHEBI:33019"/>
        <dbReference type="ChEBI" id="CHEBI:57966"/>
        <dbReference type="ChEBI" id="CHEBI:456215"/>
        <dbReference type="EC" id="6.3.2.1"/>
    </reaction>
</comment>
<comment type="pathway">
    <text evidence="1">Cofactor biosynthesis; (R)-pantothenate biosynthesis; (R)-pantothenate from (R)-pantoate and beta-alanine: step 1/1.</text>
</comment>
<comment type="subunit">
    <text evidence="1">Homodimer.</text>
</comment>
<comment type="subcellular location">
    <subcellularLocation>
        <location evidence="1">Cytoplasm</location>
    </subcellularLocation>
</comment>
<comment type="miscellaneous">
    <text evidence="1">The reaction proceeds by a bi uni uni bi ping pong mechanism.</text>
</comment>
<comment type="similarity">
    <text evidence="1">Belongs to the pantothenate synthetase family.</text>
</comment>
<gene>
    <name evidence="1" type="primary">panC</name>
    <name type="ordered locus">Ssed_3904</name>
</gene>
<proteinExistence type="inferred from homology"/>
<protein>
    <recommendedName>
        <fullName evidence="1">Pantothenate synthetase</fullName>
        <shortName evidence="1">PS</shortName>
        <ecNumber evidence="1">6.3.2.1</ecNumber>
    </recommendedName>
    <alternativeName>
        <fullName evidence="1">Pantoate--beta-alanine ligase</fullName>
    </alternativeName>
    <alternativeName>
        <fullName evidence="1">Pantoate-activating enzyme</fullName>
    </alternativeName>
</protein>
<organism>
    <name type="scientific">Shewanella sediminis (strain HAW-EB3)</name>
    <dbReference type="NCBI Taxonomy" id="425104"/>
    <lineage>
        <taxon>Bacteria</taxon>
        <taxon>Pseudomonadati</taxon>
        <taxon>Pseudomonadota</taxon>
        <taxon>Gammaproteobacteria</taxon>
        <taxon>Alteromonadales</taxon>
        <taxon>Shewanellaceae</taxon>
        <taxon>Shewanella</taxon>
    </lineage>
</organism>